<gene>
    <name evidence="1" type="primary">cwsA</name>
    <name type="ordered locus">MSMEG_0023</name>
    <name type="ordered locus">MSMEI_0025</name>
</gene>
<accession>A0QNF5</accession>
<name>CWSA_MYCS2</name>
<sequence>MPARADVRLAPRQRLTRGLKYTAVGPVDITRGVLGIGADTAQATAAELRRRYASGKLQRQLAAAAEAVAALPETIQEAVQEVVSPPKKRRRRPLLIAAVAVTVLGGGAAAFSIVRRRSRPQEPPTLAPSVEVAPKP</sequence>
<keyword id="KW-0131">Cell cycle</keyword>
<keyword id="KW-0132">Cell division</keyword>
<keyword id="KW-1003">Cell membrane</keyword>
<keyword id="KW-0133">Cell shape</keyword>
<keyword id="KW-0472">Membrane</keyword>
<keyword id="KW-1185">Reference proteome</keyword>
<keyword id="KW-0812">Transmembrane</keyword>
<keyword id="KW-1133">Transmembrane helix</keyword>
<feature type="chain" id="PRO_0000421170" description="Cell wall synthesis protein CwsA">
    <location>
        <begin position="1"/>
        <end position="136"/>
    </location>
</feature>
<feature type="transmembrane region" description="Helical" evidence="1">
    <location>
        <begin position="94"/>
        <end position="114"/>
    </location>
</feature>
<comment type="function">
    <text evidence="1 2">Required for regulated cell division, cell wall synthesis and the maintenance of cell shape.</text>
</comment>
<comment type="subunit">
    <text evidence="2">Interacts with CrgA and Wag31.</text>
</comment>
<comment type="subcellular location">
    <subcellularLocation>
        <location evidence="3">Cell membrane</location>
        <topology evidence="3">Single-pass membrane protein</topology>
    </subcellularLocation>
    <text>Localizes to poles and midcell sites.</text>
</comment>
<comment type="disruption phenotype">
    <text evidence="2">Deletion leads to defects in cell shape and polar peptidoglycan synthesis. It also compromises polar localization of Wag31.</text>
</comment>
<comment type="similarity">
    <text evidence="1">Belongs to the CwsA family.</text>
</comment>
<reference key="1">
    <citation type="submission" date="2006-10" db="EMBL/GenBank/DDBJ databases">
        <authorList>
            <person name="Fleischmann R.D."/>
            <person name="Dodson R.J."/>
            <person name="Haft D.H."/>
            <person name="Merkel J.S."/>
            <person name="Nelson W.C."/>
            <person name="Fraser C.M."/>
        </authorList>
    </citation>
    <scope>NUCLEOTIDE SEQUENCE [LARGE SCALE GENOMIC DNA]</scope>
    <source>
        <strain>ATCC 700084 / mc(2)155</strain>
    </source>
</reference>
<reference key="2">
    <citation type="journal article" date="2007" name="Genome Biol.">
        <title>Interrupted coding sequences in Mycobacterium smegmatis: authentic mutations or sequencing errors?</title>
        <authorList>
            <person name="Deshayes C."/>
            <person name="Perrodou E."/>
            <person name="Gallien S."/>
            <person name="Euphrasie D."/>
            <person name="Schaeffer C."/>
            <person name="Van-Dorsselaer A."/>
            <person name="Poch O."/>
            <person name="Lecompte O."/>
            <person name="Reyrat J.-M."/>
        </authorList>
    </citation>
    <scope>NUCLEOTIDE SEQUENCE [LARGE SCALE GENOMIC DNA]</scope>
    <source>
        <strain>ATCC 700084 / mc(2)155</strain>
    </source>
</reference>
<reference key="3">
    <citation type="journal article" date="2009" name="Genome Res.">
        <title>Ortho-proteogenomics: multiple proteomes investigation through orthology and a new MS-based protocol.</title>
        <authorList>
            <person name="Gallien S."/>
            <person name="Perrodou E."/>
            <person name="Carapito C."/>
            <person name="Deshayes C."/>
            <person name="Reyrat J.-M."/>
            <person name="Van Dorsselaer A."/>
            <person name="Poch O."/>
            <person name="Schaeffer C."/>
            <person name="Lecompte O."/>
        </authorList>
    </citation>
    <scope>NUCLEOTIDE SEQUENCE [LARGE SCALE GENOMIC DNA]</scope>
    <source>
        <strain>ATCC 700084 / mc(2)155</strain>
    </source>
</reference>
<reference key="4">
    <citation type="journal article" date="2012" name="J. Bacteriol.">
        <title>Mycobacterium tuberculosis CwsA interacts with CrgA and Wag31, and the CrgA-CwsA complex is involved in peptidoglycan synthesis and cell shape determination.</title>
        <authorList>
            <person name="Plocinski P."/>
            <person name="Arora N."/>
            <person name="Sarva K."/>
            <person name="Blaszczyk E."/>
            <person name="Qin H."/>
            <person name="Das N."/>
            <person name="Plocinska R."/>
            <person name="Ziolkiewicz M."/>
            <person name="Dziadek J."/>
            <person name="Kiran M."/>
            <person name="Gorla P."/>
            <person name="Cross T.A."/>
            <person name="Madiraju M."/>
            <person name="Rajagopalan M."/>
        </authorList>
    </citation>
    <scope>FUNCTION</scope>
    <scope>INTERACTION WITH CRGA AND WAG31</scope>
    <scope>SUBCELLULAR LOCATION</scope>
    <scope>DISRUPTION PHENOTYPE</scope>
    <scope>GENE NAME</scope>
    <source>
        <strain>ATCC 700084 / mc(2)155</strain>
    </source>
</reference>
<evidence type="ECO:0000255" key="1">
    <source>
        <dbReference type="HAMAP-Rule" id="MF_00927"/>
    </source>
</evidence>
<evidence type="ECO:0000269" key="2">
    <source>
    </source>
</evidence>
<evidence type="ECO:0000305" key="3">
    <source>
    </source>
</evidence>
<organism>
    <name type="scientific">Mycolicibacterium smegmatis (strain ATCC 700084 / mc(2)155)</name>
    <name type="common">Mycobacterium smegmatis</name>
    <dbReference type="NCBI Taxonomy" id="246196"/>
    <lineage>
        <taxon>Bacteria</taxon>
        <taxon>Bacillati</taxon>
        <taxon>Actinomycetota</taxon>
        <taxon>Actinomycetes</taxon>
        <taxon>Mycobacteriales</taxon>
        <taxon>Mycobacteriaceae</taxon>
        <taxon>Mycolicibacterium</taxon>
    </lineage>
</organism>
<protein>
    <recommendedName>
        <fullName evidence="1">Cell wall synthesis protein CwsA</fullName>
    </recommendedName>
    <alternativeName>
        <fullName evidence="1">Cell wall synthesis and cell shape protein A</fullName>
    </alternativeName>
</protein>
<proteinExistence type="evidence at protein level"/>
<dbReference type="EMBL" id="CP000480">
    <property type="protein sequence ID" value="ABK75126.1"/>
    <property type="molecule type" value="Genomic_DNA"/>
</dbReference>
<dbReference type="EMBL" id="CP001663">
    <property type="protein sequence ID" value="AFP36508.1"/>
    <property type="molecule type" value="Genomic_DNA"/>
</dbReference>
<dbReference type="RefSeq" id="WP_011726615.1">
    <property type="nucleotide sequence ID" value="NZ_SIJM01000001.1"/>
</dbReference>
<dbReference type="RefSeq" id="YP_884443.1">
    <property type="nucleotide sequence ID" value="NC_008596.1"/>
</dbReference>
<dbReference type="STRING" id="246196.MSMEG_0023"/>
<dbReference type="PaxDb" id="246196-MSMEI_0025"/>
<dbReference type="GeneID" id="93454949"/>
<dbReference type="KEGG" id="msb:LJ00_00115"/>
<dbReference type="KEGG" id="msg:MSMEI_0025"/>
<dbReference type="KEGG" id="msm:MSMEG_0023"/>
<dbReference type="PATRIC" id="fig|246196.19.peg.21"/>
<dbReference type="eggNOG" id="ENOG5030K8D">
    <property type="taxonomic scope" value="Bacteria"/>
</dbReference>
<dbReference type="OrthoDB" id="4762208at2"/>
<dbReference type="Proteomes" id="UP000000757">
    <property type="component" value="Chromosome"/>
</dbReference>
<dbReference type="Proteomes" id="UP000006158">
    <property type="component" value="Chromosome"/>
</dbReference>
<dbReference type="GO" id="GO:0005886">
    <property type="term" value="C:plasma membrane"/>
    <property type="evidence" value="ECO:0007669"/>
    <property type="project" value="UniProtKB-SubCell"/>
</dbReference>
<dbReference type="GO" id="GO:0051301">
    <property type="term" value="P:cell division"/>
    <property type="evidence" value="ECO:0007669"/>
    <property type="project" value="UniProtKB-UniRule"/>
</dbReference>
<dbReference type="GO" id="GO:0042546">
    <property type="term" value="P:cell wall biogenesis"/>
    <property type="evidence" value="ECO:0007669"/>
    <property type="project" value="UniProtKB-UniRule"/>
</dbReference>
<dbReference type="GO" id="GO:0008104">
    <property type="term" value="P:protein localization"/>
    <property type="evidence" value="ECO:0000315"/>
    <property type="project" value="CACAO"/>
</dbReference>
<dbReference type="GO" id="GO:0008360">
    <property type="term" value="P:regulation of cell shape"/>
    <property type="evidence" value="ECO:0007669"/>
    <property type="project" value="UniProtKB-UniRule"/>
</dbReference>
<dbReference type="HAMAP" id="MF_00927">
    <property type="entry name" value="CwsA"/>
    <property type="match status" value="1"/>
</dbReference>
<dbReference type="InterPro" id="IPR024245">
    <property type="entry name" value="CwsA"/>
</dbReference>
<dbReference type="Pfam" id="PF10814">
    <property type="entry name" value="CwsA"/>
    <property type="match status" value="1"/>
</dbReference>